<feature type="chain" id="PRO_0000108795" description="Phospho-N-acetylmuramoyl-pentapeptide-transferase">
    <location>
        <begin position="1"/>
        <end position="360"/>
    </location>
</feature>
<feature type="transmembrane region" description="Helical" evidence="1">
    <location>
        <begin position="27"/>
        <end position="47"/>
    </location>
</feature>
<feature type="transmembrane region" description="Helical" evidence="1">
    <location>
        <begin position="71"/>
        <end position="91"/>
    </location>
</feature>
<feature type="transmembrane region" description="Helical" evidence="1">
    <location>
        <begin position="93"/>
        <end position="113"/>
    </location>
</feature>
<feature type="transmembrane region" description="Helical" evidence="1">
    <location>
        <begin position="128"/>
        <end position="148"/>
    </location>
</feature>
<feature type="transmembrane region" description="Helical" evidence="1">
    <location>
        <begin position="168"/>
        <end position="188"/>
    </location>
</feature>
<feature type="transmembrane region" description="Helical" evidence="1">
    <location>
        <begin position="199"/>
        <end position="219"/>
    </location>
</feature>
<feature type="transmembrane region" description="Helical" evidence="1">
    <location>
        <begin position="239"/>
        <end position="259"/>
    </location>
</feature>
<feature type="transmembrane region" description="Helical" evidence="1">
    <location>
        <begin position="262"/>
        <end position="282"/>
    </location>
</feature>
<feature type="transmembrane region" description="Helical" evidence="1">
    <location>
        <begin position="288"/>
        <end position="308"/>
    </location>
</feature>
<feature type="transmembrane region" description="Helical" evidence="1">
    <location>
        <begin position="337"/>
        <end position="357"/>
    </location>
</feature>
<evidence type="ECO:0000255" key="1">
    <source>
        <dbReference type="HAMAP-Rule" id="MF_00038"/>
    </source>
</evidence>
<protein>
    <recommendedName>
        <fullName evidence="1">Phospho-N-acetylmuramoyl-pentapeptide-transferase</fullName>
        <ecNumber evidence="1">2.7.8.13</ecNumber>
    </recommendedName>
    <alternativeName>
        <fullName evidence="1">UDP-MurNAc-pentapeptide phosphotransferase</fullName>
    </alternativeName>
</protein>
<reference key="1">
    <citation type="journal article" date="2002" name="Proc. Natl. Acad. Sci. U.S.A.">
        <title>The genome sequence of the facultative intracellular pathogen Brucella melitensis.</title>
        <authorList>
            <person name="DelVecchio V.G."/>
            <person name="Kapatral V."/>
            <person name="Redkar R.J."/>
            <person name="Patra G."/>
            <person name="Mujer C."/>
            <person name="Los T."/>
            <person name="Ivanova N."/>
            <person name="Anderson I."/>
            <person name="Bhattacharyya A."/>
            <person name="Lykidis A."/>
            <person name="Reznik G."/>
            <person name="Jablonski L."/>
            <person name="Larsen N."/>
            <person name="D'Souza M."/>
            <person name="Bernal A."/>
            <person name="Mazur M."/>
            <person name="Goltsman E."/>
            <person name="Selkov E."/>
            <person name="Elzer P.H."/>
            <person name="Hagius S."/>
            <person name="O'Callaghan D."/>
            <person name="Letesson J.-J."/>
            <person name="Haselkorn R."/>
            <person name="Kyrpides N.C."/>
            <person name="Overbeek R."/>
        </authorList>
    </citation>
    <scope>NUCLEOTIDE SEQUENCE [LARGE SCALE GENOMIC DNA]</scope>
    <source>
        <strain>ATCC 23456 / CCUG 17765 / NCTC 10094 / 16M</strain>
    </source>
</reference>
<comment type="function">
    <text evidence="1">Catalyzes the initial step of the lipid cycle reactions in the biosynthesis of the cell wall peptidoglycan: transfers peptidoglycan precursor phospho-MurNAc-pentapeptide from UDP-MurNAc-pentapeptide onto the lipid carrier undecaprenyl phosphate, yielding undecaprenyl-pyrophosphoryl-MurNAc-pentapeptide, known as lipid I.</text>
</comment>
<comment type="catalytic activity">
    <reaction evidence="1">
        <text>UDP-N-acetyl-alpha-D-muramoyl-L-alanyl-gamma-D-glutamyl-meso-2,6-diaminopimeloyl-D-alanyl-D-alanine + di-trans,octa-cis-undecaprenyl phosphate = di-trans,octa-cis-undecaprenyl diphospho-N-acetyl-alpha-D-muramoyl-L-alanyl-D-glutamyl-meso-2,6-diaminopimeloyl-D-alanyl-D-alanine + UMP</text>
        <dbReference type="Rhea" id="RHEA:28386"/>
        <dbReference type="ChEBI" id="CHEBI:57865"/>
        <dbReference type="ChEBI" id="CHEBI:60392"/>
        <dbReference type="ChEBI" id="CHEBI:61386"/>
        <dbReference type="ChEBI" id="CHEBI:61387"/>
        <dbReference type="EC" id="2.7.8.13"/>
    </reaction>
</comment>
<comment type="cofactor">
    <cofactor evidence="1">
        <name>Mg(2+)</name>
        <dbReference type="ChEBI" id="CHEBI:18420"/>
    </cofactor>
</comment>
<comment type="pathway">
    <text evidence="1">Cell wall biogenesis; peptidoglycan biosynthesis.</text>
</comment>
<comment type="subcellular location">
    <subcellularLocation>
        <location evidence="1">Cell inner membrane</location>
        <topology evidence="1">Multi-pass membrane protein</topology>
    </subcellularLocation>
</comment>
<comment type="similarity">
    <text evidence="1">Belongs to the glycosyltransferase 4 family. MraY subfamily.</text>
</comment>
<name>MRAY_BRUME</name>
<keyword id="KW-0131">Cell cycle</keyword>
<keyword id="KW-0132">Cell division</keyword>
<keyword id="KW-0997">Cell inner membrane</keyword>
<keyword id="KW-1003">Cell membrane</keyword>
<keyword id="KW-0133">Cell shape</keyword>
<keyword id="KW-0961">Cell wall biogenesis/degradation</keyword>
<keyword id="KW-0460">Magnesium</keyword>
<keyword id="KW-0472">Membrane</keyword>
<keyword id="KW-0479">Metal-binding</keyword>
<keyword id="KW-0573">Peptidoglycan synthesis</keyword>
<keyword id="KW-0808">Transferase</keyword>
<keyword id="KW-0812">Transmembrane</keyword>
<keyword id="KW-1133">Transmembrane helix</keyword>
<gene>
    <name evidence="1" type="primary">mraY</name>
    <name type="ordered locus">BMEI0576</name>
</gene>
<organism>
    <name type="scientific">Brucella melitensis biotype 1 (strain ATCC 23456 / CCUG 17765 / NCTC 10094 / 16M)</name>
    <dbReference type="NCBI Taxonomy" id="224914"/>
    <lineage>
        <taxon>Bacteria</taxon>
        <taxon>Pseudomonadati</taxon>
        <taxon>Pseudomonadota</taxon>
        <taxon>Alphaproteobacteria</taxon>
        <taxon>Hyphomicrobiales</taxon>
        <taxon>Brucellaceae</taxon>
        <taxon>Brucella/Ochrobactrum group</taxon>
        <taxon>Brucella</taxon>
    </lineage>
</organism>
<accession>P64255</accession>
<accession>Q8YI69</accession>
<sequence>MLMFLTHFAEHVTPFNVFRYITFRTGGAMITSALIVFLFGPTIINSLRVRQGKGQPIRADGPQTHFKKAGTPTMGGLMIMTGILASCLLWANLASVYVWVVLMVSVGFGAIGFYDDYLKVTKQSDKGFSGKARLGIEFLIAAIAAFTIMRAGQEPFSSSLTFPFVKQLVINLSWFFIPFAAFVMVGAGNAVNLTDGLDGLAIVPVMVAAASFGFIAYLSGNAIFADYLQIHFVPGTGELAVVLGAVIGAGLGFLWFNAPPAAIFMGDTGSLALGGMLGTVAVATKHEIVLAIIGGLFVMEALSVIIQVGFFKMTGRRVFLMAPIHHHFEKKGWTESQVVIRFWIVAIILAMIGLSTLKLR</sequence>
<proteinExistence type="inferred from homology"/>
<dbReference type="EC" id="2.7.8.13" evidence="1"/>
<dbReference type="EMBL" id="AE008917">
    <property type="protein sequence ID" value="AAL51757.1"/>
    <property type="molecule type" value="Genomic_DNA"/>
</dbReference>
<dbReference type="PIR" id="AB3324">
    <property type="entry name" value="AB3324"/>
</dbReference>
<dbReference type="RefSeq" id="WP_002964542.1">
    <property type="nucleotide sequence ID" value="NZ_GG703780.1"/>
</dbReference>
<dbReference type="SMR" id="P64255"/>
<dbReference type="GeneID" id="93016268"/>
<dbReference type="KEGG" id="bme:BMEI0576"/>
<dbReference type="KEGG" id="bmel:DK63_850"/>
<dbReference type="PATRIC" id="fig|224914.52.peg.893"/>
<dbReference type="eggNOG" id="COG0472">
    <property type="taxonomic scope" value="Bacteria"/>
</dbReference>
<dbReference type="PhylomeDB" id="P64255"/>
<dbReference type="UniPathway" id="UPA00219"/>
<dbReference type="Proteomes" id="UP000000419">
    <property type="component" value="Chromosome I"/>
</dbReference>
<dbReference type="GO" id="GO:0005886">
    <property type="term" value="C:plasma membrane"/>
    <property type="evidence" value="ECO:0007669"/>
    <property type="project" value="UniProtKB-SubCell"/>
</dbReference>
<dbReference type="GO" id="GO:0046872">
    <property type="term" value="F:metal ion binding"/>
    <property type="evidence" value="ECO:0007669"/>
    <property type="project" value="UniProtKB-KW"/>
</dbReference>
<dbReference type="GO" id="GO:0008963">
    <property type="term" value="F:phospho-N-acetylmuramoyl-pentapeptide-transferase activity"/>
    <property type="evidence" value="ECO:0007669"/>
    <property type="project" value="UniProtKB-UniRule"/>
</dbReference>
<dbReference type="GO" id="GO:0051992">
    <property type="term" value="F:UDP-N-acetylmuramoyl-L-alanyl-D-glutamyl-meso-2,6-diaminopimelyl-D-alanyl-D-alanine:undecaprenyl-phosphate transferase activity"/>
    <property type="evidence" value="ECO:0007669"/>
    <property type="project" value="RHEA"/>
</dbReference>
<dbReference type="GO" id="GO:0051301">
    <property type="term" value="P:cell division"/>
    <property type="evidence" value="ECO:0007669"/>
    <property type="project" value="UniProtKB-KW"/>
</dbReference>
<dbReference type="GO" id="GO:0071555">
    <property type="term" value="P:cell wall organization"/>
    <property type="evidence" value="ECO:0007669"/>
    <property type="project" value="UniProtKB-KW"/>
</dbReference>
<dbReference type="GO" id="GO:0009252">
    <property type="term" value="P:peptidoglycan biosynthetic process"/>
    <property type="evidence" value="ECO:0007669"/>
    <property type="project" value="UniProtKB-UniRule"/>
</dbReference>
<dbReference type="GO" id="GO:0008360">
    <property type="term" value="P:regulation of cell shape"/>
    <property type="evidence" value="ECO:0007669"/>
    <property type="project" value="UniProtKB-KW"/>
</dbReference>
<dbReference type="CDD" id="cd06852">
    <property type="entry name" value="GT_MraY"/>
    <property type="match status" value="1"/>
</dbReference>
<dbReference type="HAMAP" id="MF_00038">
    <property type="entry name" value="MraY"/>
    <property type="match status" value="1"/>
</dbReference>
<dbReference type="InterPro" id="IPR000715">
    <property type="entry name" value="Glycosyl_transferase_4"/>
</dbReference>
<dbReference type="InterPro" id="IPR003524">
    <property type="entry name" value="PNAcMuramoyl-5peptid_Trfase"/>
</dbReference>
<dbReference type="InterPro" id="IPR018480">
    <property type="entry name" value="PNAcMuramoyl-5peptid_Trfase_CS"/>
</dbReference>
<dbReference type="NCBIfam" id="TIGR00445">
    <property type="entry name" value="mraY"/>
    <property type="match status" value="1"/>
</dbReference>
<dbReference type="PANTHER" id="PTHR22926">
    <property type="entry name" value="PHOSPHO-N-ACETYLMURAMOYL-PENTAPEPTIDE-TRANSFERASE"/>
    <property type="match status" value="1"/>
</dbReference>
<dbReference type="PANTHER" id="PTHR22926:SF5">
    <property type="entry name" value="PHOSPHO-N-ACETYLMURAMOYL-PENTAPEPTIDE-TRANSFERASE HOMOLOG"/>
    <property type="match status" value="1"/>
</dbReference>
<dbReference type="Pfam" id="PF00953">
    <property type="entry name" value="Glycos_transf_4"/>
    <property type="match status" value="1"/>
</dbReference>
<dbReference type="Pfam" id="PF10555">
    <property type="entry name" value="MraY_sig1"/>
    <property type="match status" value="1"/>
</dbReference>
<dbReference type="PROSITE" id="PS01347">
    <property type="entry name" value="MRAY_1"/>
    <property type="match status" value="1"/>
</dbReference>
<dbReference type="PROSITE" id="PS01348">
    <property type="entry name" value="MRAY_2"/>
    <property type="match status" value="1"/>
</dbReference>